<protein>
    <recommendedName>
        <fullName>Uncharacterized HTH-type transcriptional regulator B-115</fullName>
    </recommendedName>
</protein>
<comment type="function">
    <text evidence="2">Essential for virus function.</text>
</comment>
<reference key="1">
    <citation type="journal article" date="1991" name="Virology">
        <title>Complete nucleotide sequence of the virus SSV1 of the archaebacterium Sulfolobus shibatae.</title>
        <authorList>
            <person name="Palm P."/>
            <person name="Schleper C."/>
            <person name="Grampp B."/>
            <person name="Yeats S."/>
            <person name="McWilliam P."/>
            <person name="Reiter W.-D."/>
            <person name="Zillig W."/>
        </authorList>
    </citation>
    <scope>NUCLEOTIDE SEQUENCE [GENOMIC DNA]</scope>
</reference>
<reference key="2">
    <citation type="journal article" date="1999" name="Genetics">
        <title>Genetic requirements for the function of the archaeal virus SSV1 in Sulfolobus solfataricus: construction and testing of viral shuttle vectors.</title>
        <authorList>
            <person name="Stedman K.M."/>
            <person name="Schleper C."/>
            <person name="Rumpf E."/>
            <person name="Zillig W."/>
        </authorList>
    </citation>
    <scope>FUNCTION</scope>
</reference>
<dbReference type="EMBL" id="X07234">
    <property type="status" value="NOT_ANNOTATED_CDS"/>
    <property type="molecule type" value="Genomic_DNA"/>
</dbReference>
<dbReference type="SMR" id="P0C7L5"/>
<dbReference type="Proteomes" id="UP000000854">
    <property type="component" value="Genome"/>
</dbReference>
<dbReference type="GO" id="GO:0003677">
    <property type="term" value="F:DNA binding"/>
    <property type="evidence" value="ECO:0007669"/>
    <property type="project" value="UniProtKB-KW"/>
</dbReference>
<dbReference type="GO" id="GO:0003700">
    <property type="term" value="F:DNA-binding transcription factor activity"/>
    <property type="evidence" value="ECO:0007669"/>
    <property type="project" value="InterPro"/>
</dbReference>
<dbReference type="CDD" id="cd00090">
    <property type="entry name" value="HTH_ARSR"/>
    <property type="match status" value="1"/>
</dbReference>
<dbReference type="Gene3D" id="1.10.10.10">
    <property type="entry name" value="Winged helix-like DNA-binding domain superfamily/Winged helix DNA-binding domain"/>
    <property type="match status" value="1"/>
</dbReference>
<dbReference type="InterPro" id="IPR011991">
    <property type="entry name" value="ArsR-like_HTH"/>
</dbReference>
<dbReference type="InterPro" id="IPR001845">
    <property type="entry name" value="HTH_ArsR_DNA-bd_dom"/>
</dbReference>
<dbReference type="InterPro" id="IPR036388">
    <property type="entry name" value="WH-like_DNA-bd_sf"/>
</dbReference>
<dbReference type="InterPro" id="IPR036390">
    <property type="entry name" value="WH_DNA-bd_sf"/>
</dbReference>
<dbReference type="Pfam" id="PF13412">
    <property type="entry name" value="HTH_24"/>
    <property type="match status" value="1"/>
</dbReference>
<dbReference type="SMART" id="SM00418">
    <property type="entry name" value="HTH_ARSR"/>
    <property type="match status" value="1"/>
</dbReference>
<dbReference type="SUPFAM" id="SSF46785">
    <property type="entry name" value="Winged helix' DNA-binding domain"/>
    <property type="match status" value="1"/>
</dbReference>
<dbReference type="PROSITE" id="PS50987">
    <property type="entry name" value="HTH_ARSR_2"/>
    <property type="match status" value="1"/>
</dbReference>
<organismHost>
    <name type="scientific">Saccharolobus solfataricus</name>
    <name type="common">Sulfolobus solfataricus</name>
    <dbReference type="NCBI Taxonomy" id="2287"/>
</organismHost>
<sequence length="115" mass="13193">MTEYNANSIRAKILRRKILQLIAENYVLSASLISHTLLLSYATVLRHLRILNDEGYIELYKQGRTLYAKIRDNAKQIQILNSELEGFKNVSGKPILTKDETPKEFGKKDSLTQRG</sequence>
<gene>
    <name type="ORF">b115</name>
</gene>
<evidence type="ECO:0000255" key="1">
    <source>
        <dbReference type="PROSITE-ProRule" id="PRU00340"/>
    </source>
</evidence>
<evidence type="ECO:0000269" key="2">
    <source>
    </source>
</evidence>
<keyword id="KW-0238">DNA-binding</keyword>
<keyword id="KW-1185">Reference proteome</keyword>
<keyword id="KW-0804">Transcription</keyword>
<keyword id="KW-0805">Transcription regulation</keyword>
<name>B115_SSV1</name>
<accession>P0C7L5</accession>
<organism>
    <name type="scientific">Sulfolobus spindle-shape virus 1</name>
    <name type="common">SSV1</name>
    <dbReference type="NCBI Taxonomy" id="244589"/>
    <lineage>
        <taxon>Viruses</taxon>
        <taxon>Viruses incertae sedis</taxon>
        <taxon>Fuselloviridae</taxon>
        <taxon>Alphafusellovirus</taxon>
    </lineage>
</organism>
<feature type="chain" id="PRO_0000338014" description="Uncharacterized HTH-type transcriptional regulator B-115">
    <location>
        <begin position="1"/>
        <end position="115"/>
    </location>
</feature>
<feature type="domain" description="HTH arsR-type" evidence="1">
    <location>
        <begin position="1"/>
        <end position="91"/>
    </location>
</feature>
<feature type="DNA-binding region" description="H-T-H motif" evidence="1">
    <location>
        <begin position="30"/>
        <end position="53"/>
    </location>
</feature>
<proteinExistence type="predicted"/>